<proteinExistence type="inferred from homology"/>
<organism>
    <name type="scientific">Clostridium botulinum (strain Hall / ATCC 3502 / NCTC 13319 / Type A)</name>
    <dbReference type="NCBI Taxonomy" id="441771"/>
    <lineage>
        <taxon>Bacteria</taxon>
        <taxon>Bacillati</taxon>
        <taxon>Bacillota</taxon>
        <taxon>Clostridia</taxon>
        <taxon>Eubacteriales</taxon>
        <taxon>Clostridiaceae</taxon>
        <taxon>Clostridium</taxon>
    </lineage>
</organism>
<reference key="1">
    <citation type="journal article" date="2007" name="Genome Res.">
        <title>Genome sequence of a proteolytic (Group I) Clostridium botulinum strain Hall A and comparative analysis of the clostridial genomes.</title>
        <authorList>
            <person name="Sebaihia M."/>
            <person name="Peck M.W."/>
            <person name="Minton N.P."/>
            <person name="Thomson N.R."/>
            <person name="Holden M.T.G."/>
            <person name="Mitchell W.J."/>
            <person name="Carter A.T."/>
            <person name="Bentley S.D."/>
            <person name="Mason D.R."/>
            <person name="Crossman L."/>
            <person name="Paul C.J."/>
            <person name="Ivens A."/>
            <person name="Wells-Bennik M.H.J."/>
            <person name="Davis I.J."/>
            <person name="Cerdeno-Tarraga A.M."/>
            <person name="Churcher C."/>
            <person name="Quail M.A."/>
            <person name="Chillingworth T."/>
            <person name="Feltwell T."/>
            <person name="Fraser A."/>
            <person name="Goodhead I."/>
            <person name="Hance Z."/>
            <person name="Jagels K."/>
            <person name="Larke N."/>
            <person name="Maddison M."/>
            <person name="Moule S."/>
            <person name="Mungall K."/>
            <person name="Norbertczak H."/>
            <person name="Rabbinowitsch E."/>
            <person name="Sanders M."/>
            <person name="Simmonds M."/>
            <person name="White B."/>
            <person name="Whithead S."/>
            <person name="Parkhill J."/>
        </authorList>
    </citation>
    <scope>NUCLEOTIDE SEQUENCE [LARGE SCALE GENOMIC DNA]</scope>
    <source>
        <strain>Hall / ATCC 3502 / NCTC 13319 / Type A</strain>
    </source>
</reference>
<reference key="2">
    <citation type="journal article" date="2007" name="PLoS ONE">
        <title>Analysis of the neurotoxin complex genes in Clostridium botulinum A1-A4 and B1 strains: BoNT/A3, /Ba4 and /B1 clusters are located within plasmids.</title>
        <authorList>
            <person name="Smith T.J."/>
            <person name="Hill K.K."/>
            <person name="Foley B.T."/>
            <person name="Detter J.C."/>
            <person name="Munk A.C."/>
            <person name="Bruce D.C."/>
            <person name="Doggett N.A."/>
            <person name="Smith L.A."/>
            <person name="Marks J.D."/>
            <person name="Xie G."/>
            <person name="Brettin T.S."/>
        </authorList>
    </citation>
    <scope>NUCLEOTIDE SEQUENCE [LARGE SCALE GENOMIC DNA]</scope>
    <source>
        <strain>Hall / ATCC 3502 / NCTC 13319 / Type A</strain>
    </source>
</reference>
<keyword id="KW-0067">ATP-binding</keyword>
<keyword id="KW-0418">Kinase</keyword>
<keyword id="KW-0460">Magnesium</keyword>
<keyword id="KW-0479">Metal-binding</keyword>
<keyword id="KW-0547">Nucleotide-binding</keyword>
<keyword id="KW-1185">Reference proteome</keyword>
<keyword id="KW-0784">Thiamine biosynthesis</keyword>
<keyword id="KW-0808">Transferase</keyword>
<sequence>MQIRQSIKLKKPLIHYITNPISINDCANIILAAGAKPIMAEHPLEVSEITSVSKSLGVNLGNITDNKMKSMLISGKTAYENKIPQVIDLVGVGCSKLRLDYAKKFISECHPNVIKGNMSEIKAIYGIKSSAKGIDVGACDIITKQNFDENIEMIKRLSMETGSVVAATGVVDIISNGTYTYIISNGCEMLSMITGTGCMLTGLIASYISSENILDGTVLAVALMGICGELSQHAKGTGSFRNELTDNMFSISDDIIIKKIRINSY</sequence>
<feature type="chain" id="PRO_0000383843" description="Hydroxyethylthiazole kinase 2">
    <location>
        <begin position="1"/>
        <end position="265"/>
    </location>
</feature>
<feature type="binding site" evidence="1">
    <location>
        <position position="39"/>
    </location>
    <ligand>
        <name>substrate</name>
    </ligand>
</feature>
<feature type="binding site" evidence="1">
    <location>
        <position position="115"/>
    </location>
    <ligand>
        <name>ATP</name>
        <dbReference type="ChEBI" id="CHEBI:30616"/>
    </ligand>
</feature>
<feature type="binding site" evidence="1">
    <location>
        <position position="168"/>
    </location>
    <ligand>
        <name>ATP</name>
        <dbReference type="ChEBI" id="CHEBI:30616"/>
    </ligand>
</feature>
<feature type="binding site" evidence="1">
    <location>
        <position position="195"/>
    </location>
    <ligand>
        <name>substrate</name>
    </ligand>
</feature>
<accession>A5I421</accession>
<accession>A7G5F7</accession>
<gene>
    <name evidence="1" type="primary">thiM2</name>
    <name type="ordered locus">CBO2253</name>
    <name type="ordered locus">CLC_2176</name>
</gene>
<name>THIM2_CLOBH</name>
<comment type="function">
    <text evidence="1">Catalyzes the phosphorylation of the hydroxyl group of 4-methyl-5-beta-hydroxyethylthiazole (THZ).</text>
</comment>
<comment type="catalytic activity">
    <reaction evidence="1">
        <text>5-(2-hydroxyethyl)-4-methylthiazole + ATP = 4-methyl-5-(2-phosphooxyethyl)-thiazole + ADP + H(+)</text>
        <dbReference type="Rhea" id="RHEA:24212"/>
        <dbReference type="ChEBI" id="CHEBI:15378"/>
        <dbReference type="ChEBI" id="CHEBI:17957"/>
        <dbReference type="ChEBI" id="CHEBI:30616"/>
        <dbReference type="ChEBI" id="CHEBI:58296"/>
        <dbReference type="ChEBI" id="CHEBI:456216"/>
        <dbReference type="EC" id="2.7.1.50"/>
    </reaction>
</comment>
<comment type="cofactor">
    <cofactor evidence="1">
        <name>Mg(2+)</name>
        <dbReference type="ChEBI" id="CHEBI:18420"/>
    </cofactor>
</comment>
<comment type="pathway">
    <text evidence="1">Cofactor biosynthesis; thiamine diphosphate biosynthesis; 4-methyl-5-(2-phosphoethyl)-thiazole from 5-(2-hydroxyethyl)-4-methylthiazole: step 1/1.</text>
</comment>
<comment type="similarity">
    <text evidence="1">Belongs to the Thz kinase family.</text>
</comment>
<comment type="sequence caution" evidence="2">
    <conflict type="erroneous initiation">
        <sequence resource="EMBL-CDS" id="CAL83792"/>
    </conflict>
</comment>
<evidence type="ECO:0000255" key="1">
    <source>
        <dbReference type="HAMAP-Rule" id="MF_00228"/>
    </source>
</evidence>
<evidence type="ECO:0000305" key="2"/>
<dbReference type="EC" id="2.7.1.50" evidence="1"/>
<dbReference type="EMBL" id="AM412317">
    <property type="protein sequence ID" value="CAL83792.1"/>
    <property type="status" value="ALT_INIT"/>
    <property type="molecule type" value="Genomic_DNA"/>
</dbReference>
<dbReference type="EMBL" id="CP000727">
    <property type="protein sequence ID" value="ABS36898.1"/>
    <property type="molecule type" value="Genomic_DNA"/>
</dbReference>
<dbReference type="RefSeq" id="YP_001254744.1">
    <property type="nucleotide sequence ID" value="NC_009495.1"/>
</dbReference>
<dbReference type="RefSeq" id="YP_001388022.1">
    <property type="nucleotide sequence ID" value="NC_009698.1"/>
</dbReference>
<dbReference type="SMR" id="A5I421"/>
<dbReference type="GeneID" id="5186508"/>
<dbReference type="KEGG" id="cbh:CLC_2176"/>
<dbReference type="KEGG" id="cbo:CBO2253"/>
<dbReference type="PATRIC" id="fig|413999.7.peg.2222"/>
<dbReference type="HOGENOM" id="CLU_019943_0_0_9"/>
<dbReference type="UniPathway" id="UPA00060">
    <property type="reaction ID" value="UER00139"/>
</dbReference>
<dbReference type="PRO" id="PR:A5I421"/>
<dbReference type="Proteomes" id="UP000001986">
    <property type="component" value="Chromosome"/>
</dbReference>
<dbReference type="GO" id="GO:0005524">
    <property type="term" value="F:ATP binding"/>
    <property type="evidence" value="ECO:0007669"/>
    <property type="project" value="UniProtKB-UniRule"/>
</dbReference>
<dbReference type="GO" id="GO:0004417">
    <property type="term" value="F:hydroxyethylthiazole kinase activity"/>
    <property type="evidence" value="ECO:0007669"/>
    <property type="project" value="UniProtKB-UniRule"/>
</dbReference>
<dbReference type="GO" id="GO:0000287">
    <property type="term" value="F:magnesium ion binding"/>
    <property type="evidence" value="ECO:0007669"/>
    <property type="project" value="UniProtKB-UniRule"/>
</dbReference>
<dbReference type="GO" id="GO:0009228">
    <property type="term" value="P:thiamine biosynthetic process"/>
    <property type="evidence" value="ECO:0007669"/>
    <property type="project" value="UniProtKB-KW"/>
</dbReference>
<dbReference type="GO" id="GO:0009229">
    <property type="term" value="P:thiamine diphosphate biosynthetic process"/>
    <property type="evidence" value="ECO:0007669"/>
    <property type="project" value="UniProtKB-UniRule"/>
</dbReference>
<dbReference type="CDD" id="cd01170">
    <property type="entry name" value="THZ_kinase"/>
    <property type="match status" value="1"/>
</dbReference>
<dbReference type="Gene3D" id="3.40.1190.20">
    <property type="match status" value="1"/>
</dbReference>
<dbReference type="HAMAP" id="MF_00228">
    <property type="entry name" value="Thz_kinase"/>
    <property type="match status" value="1"/>
</dbReference>
<dbReference type="InterPro" id="IPR000417">
    <property type="entry name" value="Hyethyz_kinase"/>
</dbReference>
<dbReference type="InterPro" id="IPR029056">
    <property type="entry name" value="Ribokinase-like"/>
</dbReference>
<dbReference type="NCBIfam" id="NF006830">
    <property type="entry name" value="PRK09355.1"/>
    <property type="match status" value="1"/>
</dbReference>
<dbReference type="Pfam" id="PF02110">
    <property type="entry name" value="HK"/>
    <property type="match status" value="1"/>
</dbReference>
<dbReference type="PIRSF" id="PIRSF000513">
    <property type="entry name" value="Thz_kinase"/>
    <property type="match status" value="1"/>
</dbReference>
<dbReference type="PRINTS" id="PR01099">
    <property type="entry name" value="HYETHTZKNASE"/>
</dbReference>
<dbReference type="SUPFAM" id="SSF53613">
    <property type="entry name" value="Ribokinase-like"/>
    <property type="match status" value="1"/>
</dbReference>
<protein>
    <recommendedName>
        <fullName evidence="1">Hydroxyethylthiazole kinase 2</fullName>
        <ecNumber evidence="1">2.7.1.50</ecNumber>
    </recommendedName>
    <alternativeName>
        <fullName evidence="1">4-methyl-5-beta-hydroxyethylthiazole kinase 2</fullName>
        <shortName evidence="1">TH kinase 2</shortName>
        <shortName evidence="1">Thz kinase 2</shortName>
    </alternativeName>
</protein>